<dbReference type="EC" id="5.4.2.10" evidence="1"/>
<dbReference type="EMBL" id="AL111168">
    <property type="protein sequence ID" value="CAL34510.1"/>
    <property type="molecule type" value="Genomic_DNA"/>
</dbReference>
<dbReference type="PIR" id="F81378">
    <property type="entry name" value="F81378"/>
</dbReference>
<dbReference type="RefSeq" id="WP_002860288.1">
    <property type="nucleotide sequence ID" value="NZ_SZUC01000004.1"/>
</dbReference>
<dbReference type="RefSeq" id="YP_002343797.1">
    <property type="nucleotide sequence ID" value="NC_002163.1"/>
</dbReference>
<dbReference type="SMR" id="Q9PIE2"/>
<dbReference type="IntAct" id="Q9PIE2">
    <property type="interactions" value="17"/>
</dbReference>
<dbReference type="STRING" id="192222.Cj0360"/>
<dbReference type="PaxDb" id="192222-Cj0360"/>
<dbReference type="EnsemblBacteria" id="CAL34510">
    <property type="protein sequence ID" value="CAL34510"/>
    <property type="gene ID" value="Cj0360"/>
</dbReference>
<dbReference type="GeneID" id="904683"/>
<dbReference type="KEGG" id="cje:Cj0360"/>
<dbReference type="PATRIC" id="fig|192222.6.peg.351"/>
<dbReference type="eggNOG" id="COG1109">
    <property type="taxonomic scope" value="Bacteria"/>
</dbReference>
<dbReference type="HOGENOM" id="CLU_016950_7_0_7"/>
<dbReference type="OrthoDB" id="9806956at2"/>
<dbReference type="Proteomes" id="UP000000799">
    <property type="component" value="Chromosome"/>
</dbReference>
<dbReference type="GO" id="GO:0005829">
    <property type="term" value="C:cytosol"/>
    <property type="evidence" value="ECO:0007669"/>
    <property type="project" value="TreeGrafter"/>
</dbReference>
<dbReference type="GO" id="GO:0000287">
    <property type="term" value="F:magnesium ion binding"/>
    <property type="evidence" value="ECO:0007669"/>
    <property type="project" value="UniProtKB-UniRule"/>
</dbReference>
<dbReference type="GO" id="GO:0008966">
    <property type="term" value="F:phosphoglucosamine mutase activity"/>
    <property type="evidence" value="ECO:0007669"/>
    <property type="project" value="UniProtKB-UniRule"/>
</dbReference>
<dbReference type="GO" id="GO:0004615">
    <property type="term" value="F:phosphomannomutase activity"/>
    <property type="evidence" value="ECO:0007669"/>
    <property type="project" value="TreeGrafter"/>
</dbReference>
<dbReference type="GO" id="GO:0005975">
    <property type="term" value="P:carbohydrate metabolic process"/>
    <property type="evidence" value="ECO:0007669"/>
    <property type="project" value="InterPro"/>
</dbReference>
<dbReference type="GO" id="GO:0009252">
    <property type="term" value="P:peptidoglycan biosynthetic process"/>
    <property type="evidence" value="ECO:0007669"/>
    <property type="project" value="TreeGrafter"/>
</dbReference>
<dbReference type="GO" id="GO:0006048">
    <property type="term" value="P:UDP-N-acetylglucosamine biosynthetic process"/>
    <property type="evidence" value="ECO:0007669"/>
    <property type="project" value="TreeGrafter"/>
</dbReference>
<dbReference type="CDD" id="cd05802">
    <property type="entry name" value="GlmM"/>
    <property type="match status" value="1"/>
</dbReference>
<dbReference type="FunFam" id="3.40.120.10:FF:000001">
    <property type="entry name" value="Phosphoglucosamine mutase"/>
    <property type="match status" value="1"/>
</dbReference>
<dbReference type="FunFam" id="3.40.120.10:FF:000003">
    <property type="entry name" value="Phosphoglucosamine mutase"/>
    <property type="match status" value="1"/>
</dbReference>
<dbReference type="Gene3D" id="3.40.120.10">
    <property type="entry name" value="Alpha-D-Glucose-1,6-Bisphosphate, subunit A, domain 3"/>
    <property type="match status" value="3"/>
</dbReference>
<dbReference type="Gene3D" id="3.30.310.50">
    <property type="entry name" value="Alpha-D-phosphohexomutase, C-terminal domain"/>
    <property type="match status" value="1"/>
</dbReference>
<dbReference type="HAMAP" id="MF_01554_B">
    <property type="entry name" value="GlmM_B"/>
    <property type="match status" value="1"/>
</dbReference>
<dbReference type="InterPro" id="IPR005844">
    <property type="entry name" value="A-D-PHexomutase_a/b/a-I"/>
</dbReference>
<dbReference type="InterPro" id="IPR016055">
    <property type="entry name" value="A-D-PHexomutase_a/b/a-I/II/III"/>
</dbReference>
<dbReference type="InterPro" id="IPR005845">
    <property type="entry name" value="A-D-PHexomutase_a/b/a-II"/>
</dbReference>
<dbReference type="InterPro" id="IPR005846">
    <property type="entry name" value="A-D-PHexomutase_a/b/a-III"/>
</dbReference>
<dbReference type="InterPro" id="IPR005843">
    <property type="entry name" value="A-D-PHexomutase_C"/>
</dbReference>
<dbReference type="InterPro" id="IPR036900">
    <property type="entry name" value="A-D-PHexomutase_C_sf"/>
</dbReference>
<dbReference type="InterPro" id="IPR016066">
    <property type="entry name" value="A-D-PHexomutase_CS"/>
</dbReference>
<dbReference type="InterPro" id="IPR005841">
    <property type="entry name" value="Alpha-D-phosphohexomutase_SF"/>
</dbReference>
<dbReference type="InterPro" id="IPR006352">
    <property type="entry name" value="GlmM_bact"/>
</dbReference>
<dbReference type="InterPro" id="IPR050060">
    <property type="entry name" value="Phosphoglucosamine_mutase"/>
</dbReference>
<dbReference type="NCBIfam" id="TIGR01455">
    <property type="entry name" value="glmM"/>
    <property type="match status" value="1"/>
</dbReference>
<dbReference type="NCBIfam" id="NF008139">
    <property type="entry name" value="PRK10887.1"/>
    <property type="match status" value="1"/>
</dbReference>
<dbReference type="PANTHER" id="PTHR42946:SF1">
    <property type="entry name" value="PHOSPHOGLUCOMUTASE (ALPHA-D-GLUCOSE-1,6-BISPHOSPHATE-DEPENDENT)"/>
    <property type="match status" value="1"/>
</dbReference>
<dbReference type="PANTHER" id="PTHR42946">
    <property type="entry name" value="PHOSPHOHEXOSE MUTASE"/>
    <property type="match status" value="1"/>
</dbReference>
<dbReference type="Pfam" id="PF02878">
    <property type="entry name" value="PGM_PMM_I"/>
    <property type="match status" value="1"/>
</dbReference>
<dbReference type="Pfam" id="PF02879">
    <property type="entry name" value="PGM_PMM_II"/>
    <property type="match status" value="1"/>
</dbReference>
<dbReference type="Pfam" id="PF02880">
    <property type="entry name" value="PGM_PMM_III"/>
    <property type="match status" value="1"/>
</dbReference>
<dbReference type="Pfam" id="PF00408">
    <property type="entry name" value="PGM_PMM_IV"/>
    <property type="match status" value="1"/>
</dbReference>
<dbReference type="PRINTS" id="PR00509">
    <property type="entry name" value="PGMPMM"/>
</dbReference>
<dbReference type="SUPFAM" id="SSF55957">
    <property type="entry name" value="Phosphoglucomutase, C-terminal domain"/>
    <property type="match status" value="1"/>
</dbReference>
<dbReference type="SUPFAM" id="SSF53738">
    <property type="entry name" value="Phosphoglucomutase, first 3 domains"/>
    <property type="match status" value="3"/>
</dbReference>
<dbReference type="PROSITE" id="PS00710">
    <property type="entry name" value="PGM_PMM"/>
    <property type="match status" value="1"/>
</dbReference>
<comment type="function">
    <text evidence="1">Catalyzes the conversion of glucosamine-6-phosphate to glucosamine-1-phosphate.</text>
</comment>
<comment type="catalytic activity">
    <reaction evidence="1">
        <text>alpha-D-glucosamine 1-phosphate = D-glucosamine 6-phosphate</text>
        <dbReference type="Rhea" id="RHEA:23424"/>
        <dbReference type="ChEBI" id="CHEBI:58516"/>
        <dbReference type="ChEBI" id="CHEBI:58725"/>
        <dbReference type="EC" id="5.4.2.10"/>
    </reaction>
</comment>
<comment type="cofactor">
    <cofactor evidence="1">
        <name>Mg(2+)</name>
        <dbReference type="ChEBI" id="CHEBI:18420"/>
    </cofactor>
    <text evidence="1">Binds 1 Mg(2+) ion per subunit.</text>
</comment>
<comment type="PTM">
    <text evidence="1">Activated by phosphorylation.</text>
</comment>
<comment type="similarity">
    <text evidence="1">Belongs to the phosphohexose mutase family.</text>
</comment>
<keyword id="KW-0413">Isomerase</keyword>
<keyword id="KW-0460">Magnesium</keyword>
<keyword id="KW-0479">Metal-binding</keyword>
<keyword id="KW-0597">Phosphoprotein</keyword>
<keyword id="KW-1185">Reference proteome</keyword>
<reference key="1">
    <citation type="journal article" date="2000" name="Nature">
        <title>The genome sequence of the food-borne pathogen Campylobacter jejuni reveals hypervariable sequences.</title>
        <authorList>
            <person name="Parkhill J."/>
            <person name="Wren B.W."/>
            <person name="Mungall K.L."/>
            <person name="Ketley J.M."/>
            <person name="Churcher C.M."/>
            <person name="Basham D."/>
            <person name="Chillingworth T."/>
            <person name="Davies R.M."/>
            <person name="Feltwell T."/>
            <person name="Holroyd S."/>
            <person name="Jagels K."/>
            <person name="Karlyshev A.V."/>
            <person name="Moule S."/>
            <person name="Pallen M.J."/>
            <person name="Penn C.W."/>
            <person name="Quail M.A."/>
            <person name="Rajandream M.A."/>
            <person name="Rutherford K.M."/>
            <person name="van Vliet A.H.M."/>
            <person name="Whitehead S."/>
            <person name="Barrell B.G."/>
        </authorList>
    </citation>
    <scope>NUCLEOTIDE SEQUENCE [LARGE SCALE GENOMIC DNA]</scope>
    <source>
        <strain>ATCC 700819 / NCTC 11168</strain>
    </source>
</reference>
<organism>
    <name type="scientific">Campylobacter jejuni subsp. jejuni serotype O:2 (strain ATCC 700819 / NCTC 11168)</name>
    <dbReference type="NCBI Taxonomy" id="192222"/>
    <lineage>
        <taxon>Bacteria</taxon>
        <taxon>Pseudomonadati</taxon>
        <taxon>Campylobacterota</taxon>
        <taxon>Epsilonproteobacteria</taxon>
        <taxon>Campylobacterales</taxon>
        <taxon>Campylobacteraceae</taxon>
        <taxon>Campylobacter</taxon>
    </lineage>
</organism>
<gene>
    <name evidence="1" type="primary">glmM</name>
    <name type="ordered locus">Cj0360</name>
</gene>
<sequence length="445" mass="48797">MKLFGTDGVRGKAGEFLDSFLAMRLAMAAGIYFKDKSITNNILVGKDTRRSGYMIENAIVSGLTSIGYNVIQIGPMPTPAIAFLTEDMRCDAGIMISASHNPYYDNGIKFFDAHGNKLSEDIEKKIEEIYFDDKLIQASKVDMEKIGQAKRIDDVIGRYIVSIKNSFPKDLTLKSLRVVLDVAHGAAYKVAPTVFKELGAEVIVMSDKPNGLNINENCGALHPANLAAEVKRLRADVGFAFDGDADRLVVVDEKGEVANGDSLLGVLALYLKEQGKLQSSVVATIMSNGALKEFLNKHGIELDTCNVGDKYVLEKLKANGGNFGGEQSGHIIFSDYAKTGDGLIAALQFSALMLSKKKSASSILGQVKPYPQLLTNLKIAEKKDLDKIKGLKELKKDLENKNINTLFRYSGTENLIRLLLEARDIKLLEKEMKNVVEFFKKALNG</sequence>
<protein>
    <recommendedName>
        <fullName evidence="1">Phosphoglucosamine mutase</fullName>
        <ecNumber evidence="1">5.4.2.10</ecNumber>
    </recommendedName>
</protein>
<accession>Q9PIE2</accession>
<accession>Q0PBF0</accession>
<proteinExistence type="inferred from homology"/>
<feature type="chain" id="PRO_0000147864" description="Phosphoglucosamine mutase">
    <location>
        <begin position="1"/>
        <end position="445"/>
    </location>
</feature>
<feature type="active site" description="Phosphoserine intermediate" evidence="1">
    <location>
        <position position="99"/>
    </location>
</feature>
<feature type="binding site" description="via phosphate group" evidence="1">
    <location>
        <position position="99"/>
    </location>
    <ligand>
        <name>Mg(2+)</name>
        <dbReference type="ChEBI" id="CHEBI:18420"/>
    </ligand>
</feature>
<feature type="binding site" evidence="1">
    <location>
        <position position="242"/>
    </location>
    <ligand>
        <name>Mg(2+)</name>
        <dbReference type="ChEBI" id="CHEBI:18420"/>
    </ligand>
</feature>
<feature type="binding site" evidence="1">
    <location>
        <position position="244"/>
    </location>
    <ligand>
        <name>Mg(2+)</name>
        <dbReference type="ChEBI" id="CHEBI:18420"/>
    </ligand>
</feature>
<feature type="binding site" evidence="1">
    <location>
        <position position="246"/>
    </location>
    <ligand>
        <name>Mg(2+)</name>
        <dbReference type="ChEBI" id="CHEBI:18420"/>
    </ligand>
</feature>
<feature type="modified residue" description="Phosphoserine" evidence="1">
    <location>
        <position position="99"/>
    </location>
</feature>
<name>GLMM_CAMJE</name>
<evidence type="ECO:0000255" key="1">
    <source>
        <dbReference type="HAMAP-Rule" id="MF_01554"/>
    </source>
</evidence>